<keyword id="KW-0002">3D-structure</keyword>
<keyword id="KW-0903">Direct protein sequencing</keyword>
<keyword id="KW-0238">DNA-binding</keyword>
<keyword id="KW-0539">Nucleus</keyword>
<keyword id="KW-0597">Phosphoprotein</keyword>
<keyword id="KW-1185">Reference proteome</keyword>
<keyword id="KW-0677">Repeat</keyword>
<keyword id="KW-0802">TPR repeat</keyword>
<keyword id="KW-0804">Transcription</keyword>
<keyword id="KW-0805">Transcription regulation</keyword>
<organism>
    <name type="scientific">Saccharomyces cerevisiae (strain ATCC 204508 / S288c)</name>
    <name type="common">Baker's yeast</name>
    <dbReference type="NCBI Taxonomy" id="559292"/>
    <lineage>
        <taxon>Eukaryota</taxon>
        <taxon>Fungi</taxon>
        <taxon>Dikarya</taxon>
        <taxon>Ascomycota</taxon>
        <taxon>Saccharomycotina</taxon>
        <taxon>Saccharomycetes</taxon>
        <taxon>Saccharomycetales</taxon>
        <taxon>Saccharomycetaceae</taxon>
        <taxon>Saccharomyces</taxon>
    </lineage>
</organism>
<protein>
    <recommendedName>
        <fullName>Transcription factor tau 131 kDa subunit</fullName>
    </recommendedName>
    <alternativeName>
        <fullName>TFIIIC 131 kDa subunit</fullName>
    </alternativeName>
    <alternativeName>
        <fullName>Transcription factor C subunit 4</fullName>
    </alternativeName>
</protein>
<evidence type="ECO:0000256" key="1">
    <source>
        <dbReference type="SAM" id="MobiDB-lite"/>
    </source>
</evidence>
<evidence type="ECO:0000269" key="2">
    <source>
    </source>
</evidence>
<evidence type="ECO:0000269" key="3">
    <source>
    </source>
</evidence>
<evidence type="ECO:0000269" key="4">
    <source>
    </source>
</evidence>
<evidence type="ECO:0000269" key="5">
    <source>
    </source>
</evidence>
<evidence type="ECO:0000269" key="6">
    <source>
    </source>
</evidence>
<evidence type="ECO:0000269" key="7">
    <source>
    </source>
</evidence>
<evidence type="ECO:0000269" key="8">
    <source>
    </source>
</evidence>
<evidence type="ECO:0000269" key="9">
    <source>
    </source>
</evidence>
<evidence type="ECO:0000269" key="10">
    <source>
    </source>
</evidence>
<evidence type="ECO:0000269" key="11">
    <source>
    </source>
</evidence>
<evidence type="ECO:0000269" key="12">
    <source>
    </source>
</evidence>
<evidence type="ECO:0000269" key="13">
    <source>
    </source>
</evidence>
<evidence type="ECO:0000269" key="14">
    <source>
    </source>
</evidence>
<evidence type="ECO:0000269" key="15">
    <source>
    </source>
</evidence>
<evidence type="ECO:0007744" key="16">
    <source>
    </source>
</evidence>
<evidence type="ECO:0007829" key="17">
    <source>
        <dbReference type="PDB" id="5AIO"/>
    </source>
</evidence>
<evidence type="ECO:0007829" key="18">
    <source>
        <dbReference type="PDB" id="6YJ6"/>
    </source>
</evidence>
<dbReference type="EMBL" id="L12722">
    <property type="protein sequence ID" value="AAA35145.1"/>
    <property type="molecule type" value="Genomic_DNA"/>
</dbReference>
<dbReference type="EMBL" id="DQ115391">
    <property type="protein sequence ID" value="AAZ22462.1"/>
    <property type="molecule type" value="Genomic_DNA"/>
</dbReference>
<dbReference type="EMBL" id="Z72832">
    <property type="protein sequence ID" value="CAA97046.1"/>
    <property type="molecule type" value="Genomic_DNA"/>
</dbReference>
<dbReference type="EMBL" id="Z72833">
    <property type="protein sequence ID" value="CAA97048.1"/>
    <property type="molecule type" value="Genomic_DNA"/>
</dbReference>
<dbReference type="EMBL" id="BK006941">
    <property type="protein sequence ID" value="DAA08145.1"/>
    <property type="molecule type" value="Genomic_DNA"/>
</dbReference>
<dbReference type="PIR" id="A47453">
    <property type="entry name" value="A47453"/>
</dbReference>
<dbReference type="RefSeq" id="NP_011561.3">
    <property type="nucleotide sequence ID" value="NM_001181176.3"/>
</dbReference>
<dbReference type="PDB" id="5AEM">
    <property type="method" value="X-ray"/>
    <property type="resolution" value="3.40 A"/>
    <property type="chains" value="A=123-566"/>
</dbReference>
<dbReference type="PDB" id="5AIO">
    <property type="method" value="X-ray"/>
    <property type="resolution" value="3.15 A"/>
    <property type="chains" value="A=123-566"/>
</dbReference>
<dbReference type="PDB" id="6YJ6">
    <property type="method" value="EM"/>
    <property type="resolution" value="3.10 A"/>
    <property type="chains" value="A=1-1025"/>
</dbReference>
<dbReference type="PDB" id="8FFZ">
    <property type="method" value="EM"/>
    <property type="resolution" value="3.80 A"/>
    <property type="chains" value="C=1-1025"/>
</dbReference>
<dbReference type="PDB" id="9GCK">
    <property type="method" value="EM"/>
    <property type="resolution" value="3.70 A"/>
    <property type="chains" value="B=1-1025"/>
</dbReference>
<dbReference type="PDBsum" id="5AEM"/>
<dbReference type="PDBsum" id="5AIO"/>
<dbReference type="PDBsum" id="6YJ6"/>
<dbReference type="PDBsum" id="8FFZ"/>
<dbReference type="PDBsum" id="9GCK"/>
<dbReference type="EMDB" id="EMD-10817"/>
<dbReference type="EMDB" id="EMD-29071"/>
<dbReference type="EMDB" id="EMD-51231"/>
<dbReference type="SMR" id="P33339"/>
<dbReference type="BioGRID" id="33294">
    <property type="interactions" value="142"/>
</dbReference>
<dbReference type="ComplexPortal" id="CPX-1656">
    <property type="entry name" value="General transcription factor TFIIIC complex"/>
</dbReference>
<dbReference type="DIP" id="DIP-230N"/>
<dbReference type="FunCoup" id="P33339">
    <property type="interactions" value="1342"/>
</dbReference>
<dbReference type="IntAct" id="P33339">
    <property type="interactions" value="19"/>
</dbReference>
<dbReference type="MINT" id="P33339"/>
<dbReference type="STRING" id="4932.YGR047C"/>
<dbReference type="iPTMnet" id="P33339"/>
<dbReference type="PaxDb" id="4932-YGR047C"/>
<dbReference type="PeptideAtlas" id="P33339"/>
<dbReference type="EnsemblFungi" id="YGR047C_mRNA">
    <property type="protein sequence ID" value="YGR047C"/>
    <property type="gene ID" value="YGR047C"/>
</dbReference>
<dbReference type="GeneID" id="852938"/>
<dbReference type="KEGG" id="sce:YGR047C"/>
<dbReference type="AGR" id="SGD:S000003279"/>
<dbReference type="SGD" id="S000003279">
    <property type="gene designation" value="TFC4"/>
</dbReference>
<dbReference type="VEuPathDB" id="FungiDB:YGR047C"/>
<dbReference type="eggNOG" id="KOG2076">
    <property type="taxonomic scope" value="Eukaryota"/>
</dbReference>
<dbReference type="GeneTree" id="ENSGT00390000016929"/>
<dbReference type="HOGENOM" id="CLU_002391_0_1_1"/>
<dbReference type="InParanoid" id="P33339"/>
<dbReference type="OMA" id="SSPNMKF"/>
<dbReference type="OrthoDB" id="9991317at2759"/>
<dbReference type="BioCyc" id="YEAST:G3O-30765-MONOMER"/>
<dbReference type="Reactome" id="R-SCE-76066">
    <property type="pathway name" value="RNA Polymerase III Transcription Initiation From Type 2 Promoter"/>
</dbReference>
<dbReference type="BioGRID-ORCS" id="852938">
    <property type="hits" value="3 hits in 10 CRISPR screens"/>
</dbReference>
<dbReference type="EvolutionaryTrace" id="P33339"/>
<dbReference type="PRO" id="PR:P33339"/>
<dbReference type="Proteomes" id="UP000002311">
    <property type="component" value="Chromosome VII"/>
</dbReference>
<dbReference type="RNAct" id="P33339">
    <property type="molecule type" value="protein"/>
</dbReference>
<dbReference type="GO" id="GO:0005737">
    <property type="term" value="C:cytoplasm"/>
    <property type="evidence" value="ECO:0007005"/>
    <property type="project" value="SGD"/>
</dbReference>
<dbReference type="GO" id="GO:0005654">
    <property type="term" value="C:nucleoplasm"/>
    <property type="evidence" value="ECO:0000304"/>
    <property type="project" value="Reactome"/>
</dbReference>
<dbReference type="GO" id="GO:0005634">
    <property type="term" value="C:nucleus"/>
    <property type="evidence" value="ECO:0007005"/>
    <property type="project" value="SGD"/>
</dbReference>
<dbReference type="GO" id="GO:0000127">
    <property type="term" value="C:transcription factor TFIIIC complex"/>
    <property type="evidence" value="ECO:0000314"/>
    <property type="project" value="SGD"/>
</dbReference>
<dbReference type="GO" id="GO:0003677">
    <property type="term" value="F:DNA binding"/>
    <property type="evidence" value="ECO:0007669"/>
    <property type="project" value="UniProtKB-KW"/>
</dbReference>
<dbReference type="GO" id="GO:0042791">
    <property type="term" value="P:5S class rRNA transcription by RNA polymerase III"/>
    <property type="evidence" value="ECO:0000314"/>
    <property type="project" value="SGD"/>
</dbReference>
<dbReference type="GO" id="GO:0006383">
    <property type="term" value="P:transcription by RNA polymerase III"/>
    <property type="evidence" value="ECO:0000314"/>
    <property type="project" value="SGD"/>
</dbReference>
<dbReference type="GO" id="GO:0006384">
    <property type="term" value="P:transcription initiation at RNA polymerase III promoter"/>
    <property type="evidence" value="ECO:0000303"/>
    <property type="project" value="ComplexPortal"/>
</dbReference>
<dbReference type="FunFam" id="1.25.40.10:FF:000945">
    <property type="entry name" value="Transcription factor tau 131 kDa subunit"/>
    <property type="match status" value="1"/>
</dbReference>
<dbReference type="FunFam" id="1.25.40.10:FF:000667">
    <property type="entry name" value="Transcription factor TFIIIC subunit"/>
    <property type="match status" value="1"/>
</dbReference>
<dbReference type="Gene3D" id="1.25.40.10">
    <property type="entry name" value="Tetratricopeptide repeat domain"/>
    <property type="match status" value="4"/>
</dbReference>
<dbReference type="InterPro" id="IPR039340">
    <property type="entry name" value="Tfc4/TFIIIC-102/Sfc4"/>
</dbReference>
<dbReference type="InterPro" id="IPR011990">
    <property type="entry name" value="TPR-like_helical_dom_sf"/>
</dbReference>
<dbReference type="InterPro" id="IPR019734">
    <property type="entry name" value="TPR_rpt"/>
</dbReference>
<dbReference type="PANTHER" id="PTHR23082:SF0">
    <property type="entry name" value="GENERAL TRANSCRIPTION FACTOR 3C POLYPEPTIDE 3"/>
    <property type="match status" value="1"/>
</dbReference>
<dbReference type="PANTHER" id="PTHR23082">
    <property type="entry name" value="TRANSCRIPTION INITIATION FACTOR IIIC TFIIIC , POLYPEPTIDE 3-RELATED"/>
    <property type="match status" value="1"/>
</dbReference>
<dbReference type="Pfam" id="PF13432">
    <property type="entry name" value="TPR_16"/>
    <property type="match status" value="1"/>
</dbReference>
<dbReference type="Pfam" id="PF13181">
    <property type="entry name" value="TPR_8"/>
    <property type="match status" value="1"/>
</dbReference>
<dbReference type="SMART" id="SM00028">
    <property type="entry name" value="TPR"/>
    <property type="match status" value="8"/>
</dbReference>
<dbReference type="SUPFAM" id="SSF48452">
    <property type="entry name" value="TPR-like"/>
    <property type="match status" value="2"/>
</dbReference>
<dbReference type="PROSITE" id="PS50005">
    <property type="entry name" value="TPR"/>
    <property type="match status" value="6"/>
</dbReference>
<dbReference type="PROSITE" id="PS50293">
    <property type="entry name" value="TPR_REGION"/>
    <property type="match status" value="3"/>
</dbReference>
<gene>
    <name type="primary">TFC4</name>
    <name type="synonym">PCF1</name>
    <name type="ordered locus">YGR047C</name>
</gene>
<sequence length="1025" mass="120229">MAAGKLKKEQQNQSAERESADTGKVNDEDEEHLYGNIDDYKHLIQDEEYDDEDVPHDLQLSEDEYNSERDSSLLAEFSDYGEISEDDEEDFMNAIREASNFKVKKKKKNDKGKSYGRQRKERVLDPEVAQLLSQANEAFVRNDLQVAERLFNEVIKKDARNFAAYETLGDIYQLQGRLNDCCNSWFLAAHLNASDWEFWKIVAILSADLDHVRQAIYCFSRVISLNPMEWESIYRRSMLYKKTGQLARALDGFQRLYMYNPYDANILRELAILYVDYDRIEDSIELYMKVFNANVERREAILAALENALDSSDEESAAEGEDADEKEPLEQDEDRQMFPDINWKKIDAKYKCIPFDWSSLNILAELFLKLAVSEVDGIKTIKKCARWIQRRESQTFWDHVPDDSEFDNRRFKNSTFDSLLAAEKEKSYNIPIDIRVRLGLLRLNTDNLVEALNHFQCLYDETFSDVADLYFEAATALTRAEKYKEAIDFFTPLLSLEEWRTTDVFKPLARCYKEIESYETAKEFYELAIKSEPDDLDIRVSLAEVYYRLNDPETFKHMLVDVVEMRKHQVDETLHRISNEKSSNDTSDISSKPLLEDSKFRTFRKKKRTPYDAERERIERERRITAKVVDKYEKMKKFELNSGLNEAKQASIWINTVSELVDIFSSVKNFFMKSRSRKFVGILRRTKKFNTELDFQIERLSKLAEGDSVFEGPLMEERVTLTSATELRGLSYEQWFELFMELSLVIAKYQSVEDGLSVVETAQEVNVFFQDPERVKMMKFVKLAIVLQMDDEEELAENLRGLLNQFQFNRKVLQVFMYSLCRGPSSLNILSSTIQQKFFLRQLKAFDSCRYNTEVNGQASITNKEVYNPNKKSSPYLYYIYAVLLYSSRGFLSALQYLTRLEEDIPDDPMVNLLMGLSHIHRAMQRLTAQRHFQIFHGLRYLYRYHKIRKSLYTDLEKQEADYNLGRAFHLIGLVSIAIEYYNRVLENYDDGKLKKHAAYNSIIIYQQSGNVELADHLMEKYLSI</sequence>
<proteinExistence type="evidence at protein level"/>
<reference key="1">
    <citation type="journal article" date="1993" name="Proc. Natl. Acad. Sci. U.S.A.">
        <title>The TFIIIB-assembling subunit of yeast transcription factor TFIIIC has both tetratricopeptide repeats and basic helix-loop-helix motifs.</title>
        <authorList>
            <person name="Marck C."/>
            <person name="Lefebvre O."/>
            <person name="Carles C."/>
            <person name="Riva M."/>
            <person name="Chaussivert N."/>
            <person name="Ruet A."/>
            <person name="Sentenac A."/>
        </authorList>
    </citation>
    <scope>NUCLEOTIDE SEQUENCE [GENOMIC DNA]</scope>
    <scope>FUNCTION</scope>
    <scope>IDENTIFICATION IN TFIIIC</scope>
    <source>
        <strain>ATCC 204508 / S288c</strain>
    </source>
</reference>
<reference key="2">
    <citation type="journal article" date="1994" name="Mol. Cell. Biol.">
        <title>A mutation in the second largest subunit of TFIIIC increases a rate-limiting step in transcription by RNA polymerase III.</title>
        <authorList>
            <person name="Rameau G."/>
            <person name="Puglia K."/>
            <person name="Crowe A."/>
            <person name="Sethy I."/>
            <person name="Willis I."/>
        </authorList>
    </citation>
    <scope>NUCLEOTIDE SEQUENCE [GENOMIC DNA]</scope>
    <scope>IDENTIFICATION IN TFIIIC</scope>
    <scope>MUTAGENESIS OF HIS-190</scope>
</reference>
<reference key="3">
    <citation type="journal article" date="1997" name="Mol. Cell. Biol.">
        <title>A tetratricopeptide repeat mutation in yeast transcription factor IIIC131 (TFIIIC131) facilitates recruitment of TFIIB-related factor TFIIIB70.</title>
        <authorList>
            <person name="Moir R.D."/>
            <person name="Sethy-Coraci I."/>
            <person name="Puglia K."/>
            <person name="Librizzi M.D."/>
            <person name="Willis I.M."/>
        </authorList>
    </citation>
    <scope>NUCLEOTIDE SEQUENCE [GENOMIC DNA]</scope>
    <scope>PROTEIN SEQUENCE OF 147-205</scope>
    <scope>MUTAGENESIS OF GLU-148; PHE-162; ALA-164; THR-167; TYR-171; ALA-188; HIS-190; ASN-192 AND TRP-199</scope>
</reference>
<reference key="4">
    <citation type="journal article" date="2002" name="Mol. Cell. Biol.">
        <title>A gain-of-function mutation in the second tetratricopeptide repeat of TFIIIC131 relieves autoinhibition of Brf1 binding.</title>
        <authorList>
            <person name="Moir R.D."/>
            <person name="Puglia K.V."/>
            <person name="Willis I.M."/>
        </authorList>
    </citation>
    <scope>NUCLEOTIDE SEQUENCE [GENOMIC DNA]</scope>
    <scope>MUTAGENESIS OF HIS-190</scope>
</reference>
<reference key="5">
    <citation type="journal article" date="2005" name="Nat. Genet.">
        <title>Quantitative trait loci mapped to single-nucleotide resolution in yeast.</title>
        <authorList>
            <person name="Deutschbauer A.M."/>
            <person name="Davis R.W."/>
        </authorList>
    </citation>
    <scope>NUCLEOTIDE SEQUENCE [GENOMIC DNA]</scope>
    <scope>VARIANTS THR-280; VAL-635 AND VAL-1025</scope>
    <source>
        <strain>SK1</strain>
    </source>
</reference>
<reference key="6">
    <citation type="journal article" date="1997" name="Nature">
        <title>The nucleotide sequence of Saccharomyces cerevisiae chromosome VII.</title>
        <authorList>
            <person name="Tettelin H."/>
            <person name="Agostoni-Carbone M.L."/>
            <person name="Albermann K."/>
            <person name="Albers M."/>
            <person name="Arroyo J."/>
            <person name="Backes U."/>
            <person name="Barreiros T."/>
            <person name="Bertani I."/>
            <person name="Bjourson A.J."/>
            <person name="Brueckner M."/>
            <person name="Bruschi C.V."/>
            <person name="Carignani G."/>
            <person name="Castagnoli L."/>
            <person name="Cerdan E."/>
            <person name="Clemente M.L."/>
            <person name="Coblenz A."/>
            <person name="Coglievina M."/>
            <person name="Coissac E."/>
            <person name="Defoor E."/>
            <person name="Del Bino S."/>
            <person name="Delius H."/>
            <person name="Delneri D."/>
            <person name="de Wergifosse P."/>
            <person name="Dujon B."/>
            <person name="Durand P."/>
            <person name="Entian K.-D."/>
            <person name="Eraso P."/>
            <person name="Escribano V."/>
            <person name="Fabiani L."/>
            <person name="Fartmann B."/>
            <person name="Feroli F."/>
            <person name="Feuermann M."/>
            <person name="Frontali L."/>
            <person name="Garcia-Gonzalez M."/>
            <person name="Garcia-Saez M.I."/>
            <person name="Goffeau A."/>
            <person name="Guerreiro P."/>
            <person name="Hani J."/>
            <person name="Hansen M."/>
            <person name="Hebling U."/>
            <person name="Hernandez K."/>
            <person name="Heumann K."/>
            <person name="Hilger F."/>
            <person name="Hofmann B."/>
            <person name="Indge K.J."/>
            <person name="James C.M."/>
            <person name="Klima R."/>
            <person name="Koetter P."/>
            <person name="Kramer B."/>
            <person name="Kramer W."/>
            <person name="Lauquin G."/>
            <person name="Leuther H."/>
            <person name="Louis E.J."/>
            <person name="Maillier E."/>
            <person name="Marconi A."/>
            <person name="Martegani E."/>
            <person name="Mazon M.J."/>
            <person name="Mazzoni C."/>
            <person name="McReynolds A.D.K."/>
            <person name="Melchioretto P."/>
            <person name="Mewes H.-W."/>
            <person name="Minenkova O."/>
            <person name="Mueller-Auer S."/>
            <person name="Nawrocki A."/>
            <person name="Netter P."/>
            <person name="Neu R."/>
            <person name="Nombela C."/>
            <person name="Oliver S.G."/>
            <person name="Panzeri L."/>
            <person name="Paoluzi S."/>
            <person name="Plevani P."/>
            <person name="Portetelle D."/>
            <person name="Portillo F."/>
            <person name="Potier S."/>
            <person name="Purnelle B."/>
            <person name="Rieger M."/>
            <person name="Riles L."/>
            <person name="Rinaldi T."/>
            <person name="Robben J."/>
            <person name="Rodrigues-Pousada C."/>
            <person name="Rodriguez-Belmonte E."/>
            <person name="Rodriguez-Torres A.M."/>
            <person name="Rose M."/>
            <person name="Ruzzi M."/>
            <person name="Saliola M."/>
            <person name="Sanchez-Perez M."/>
            <person name="Schaefer B."/>
            <person name="Schaefer M."/>
            <person name="Scharfe M."/>
            <person name="Schmidheini T."/>
            <person name="Schreer A."/>
            <person name="Skala J."/>
            <person name="Souciet J.-L."/>
            <person name="Steensma H.Y."/>
            <person name="Talla E."/>
            <person name="Thierry A."/>
            <person name="Vandenbol M."/>
            <person name="van der Aart Q.J.M."/>
            <person name="Van Dyck L."/>
            <person name="Vanoni M."/>
            <person name="Verhasselt P."/>
            <person name="Voet M."/>
            <person name="Volckaert G."/>
            <person name="Wambutt R."/>
            <person name="Watson M.D."/>
            <person name="Weber N."/>
            <person name="Wedler E."/>
            <person name="Wedler H."/>
            <person name="Wipfli P."/>
            <person name="Wolf K."/>
            <person name="Wright L.F."/>
            <person name="Zaccaria P."/>
            <person name="Zimmermann M."/>
            <person name="Zollner A."/>
            <person name="Kleine K."/>
        </authorList>
    </citation>
    <scope>NUCLEOTIDE SEQUENCE [LARGE SCALE GENOMIC DNA]</scope>
    <source>
        <strain>ATCC 204508 / S288c</strain>
    </source>
</reference>
<reference key="7">
    <citation type="journal article" date="2014" name="G3 (Bethesda)">
        <title>The reference genome sequence of Saccharomyces cerevisiae: Then and now.</title>
        <authorList>
            <person name="Engel S.R."/>
            <person name="Dietrich F.S."/>
            <person name="Fisk D.G."/>
            <person name="Binkley G."/>
            <person name="Balakrishnan R."/>
            <person name="Costanzo M.C."/>
            <person name="Dwight S.S."/>
            <person name="Hitz B.C."/>
            <person name="Karra K."/>
            <person name="Nash R.S."/>
            <person name="Weng S."/>
            <person name="Wong E.D."/>
            <person name="Lloyd P."/>
            <person name="Skrzypek M.S."/>
            <person name="Miyasato S.R."/>
            <person name="Simison M."/>
            <person name="Cherry J.M."/>
        </authorList>
    </citation>
    <scope>GENOME REANNOTATION</scope>
    <source>
        <strain>ATCC 204508 / S288c</strain>
    </source>
</reference>
<reference key="8">
    <citation type="journal article" date="1989" name="EMBO J.">
        <title>A selection for mutants of the RNA polymerase III transcription apparatus: PCF1 stimulates transcription of tRNA and 5S RNA genes.</title>
        <authorList>
            <person name="Willis I."/>
            <person name="Schmidt P."/>
            <person name="Soell D."/>
        </authorList>
    </citation>
    <scope>FUNCTION</scope>
</reference>
<reference key="9">
    <citation type="journal article" date="1990" name="J. Biol. Chem.">
        <title>Purification and characterization of Saccharomyces cerevisiae transcription factor TFIIIC. Polypeptide composition defined with polyclonal antibodies.</title>
        <authorList>
            <person name="Parsons M.C."/>
            <person name="Weil P.A."/>
        </authorList>
    </citation>
    <scope>IDENTIFICATION IN TFIIIC</scope>
</reference>
<reference key="10">
    <citation type="journal article" date="1991" name="Mol. Cell. Biol.">
        <title>Two components of Saccharomyces cerevisiae transcription factor IIIB (TFIIIB) are stereospecifically located upstream of a tRNA gene and interact with the second-largest subunit of TFIIIC.</title>
        <authorList>
            <person name="Bartholomew B."/>
            <person name="Kassavetis G.A."/>
            <person name="Geiduschek E.P."/>
        </authorList>
    </citation>
    <scope>INTERACTION WITH TFIIIB</scope>
</reference>
<reference key="11">
    <citation type="journal article" date="1993" name="J. Biol. Chem.">
        <title>On the subunit composition, stoichiometry, and phosphorylation of the yeast transcription factor TFIIIC/tau.</title>
        <authorList>
            <person name="Conesa C."/>
            <person name="Swanson R.N."/>
            <person name="Schultz P."/>
            <person name="Oudet P."/>
            <person name="Sentenac A."/>
        </authorList>
    </citation>
    <scope>INTERACTION WITH TFC1; TFC3 AND TFC6</scope>
    <scope>PHOSPHORYLATION</scope>
</reference>
<reference key="12">
    <citation type="journal article" date="1995" name="Gene Expr.">
        <title>Recessive mutations in the second largest subunit of TFIIIC suggest a new step in RNA polymerase III transcription.</title>
        <authorList>
            <person name="Sethy I."/>
            <person name="Willis I.M."/>
        </authorList>
    </citation>
    <scope>MUTAGENESIS OF HIS-190 AND ARG-728</scope>
</reference>
<reference key="13">
    <citation type="journal article" date="1999" name="J. Biol. Chem.">
        <title>Interaction between yeast RNA polymerase III and transcription factor TFIIIC via ABC10alpha and tau131 subunits.</title>
        <authorList>
            <person name="Dumay H."/>
            <person name="Rubbi L."/>
            <person name="Sentenac A."/>
            <person name="Marck C."/>
        </authorList>
    </citation>
    <scope>INTERACTION WITH RPC10</scope>
</reference>
<reference key="14">
    <citation type="journal article" date="2003" name="J. Biol. Chem.">
        <title>The Brf1 and Bdp1 subunits of transcription factor TFIIIB bind to overlapping sites in the tetratricopeptide repeats of Tfc4.</title>
        <authorList>
            <person name="Liao Y."/>
            <person name="Willis I.M."/>
            <person name="Moir R.D."/>
        </authorList>
    </citation>
    <scope>INTERACTION WITH BRF1 AND BDP1</scope>
    <scope>MUTAGENESIS OF LEU-469; GLU-472; VAL-504; SER-541 AND LEU-542</scope>
</reference>
<reference key="15">
    <citation type="journal article" date="2003" name="Nature">
        <title>Global analysis of protein localization in budding yeast.</title>
        <authorList>
            <person name="Huh W.-K."/>
            <person name="Falvo J.V."/>
            <person name="Gerke L.C."/>
            <person name="Carroll A.S."/>
            <person name="Howson R.W."/>
            <person name="Weissman J.S."/>
            <person name="O'Shea E.K."/>
        </authorList>
    </citation>
    <scope>SUBCELLULAR LOCATION [LARGE SCALE ANALYSIS]</scope>
</reference>
<reference key="16">
    <citation type="journal article" date="2003" name="Nature">
        <title>Global analysis of protein expression in yeast.</title>
        <authorList>
            <person name="Ghaemmaghami S."/>
            <person name="Huh W.-K."/>
            <person name="Bower K."/>
            <person name="Howson R.W."/>
            <person name="Belle A."/>
            <person name="Dephoure N."/>
            <person name="O'Shea E.K."/>
            <person name="Weissman J.S."/>
        </authorList>
    </citation>
    <scope>LEVEL OF PROTEIN EXPRESSION [LARGE SCALE ANALYSIS]</scope>
</reference>
<reference key="17">
    <citation type="journal article" date="2009" name="Science">
        <title>Global analysis of Cdk1 substrate phosphorylation sites provides insights into evolution.</title>
        <authorList>
            <person name="Holt L.J."/>
            <person name="Tuch B.B."/>
            <person name="Villen J."/>
            <person name="Johnson A.D."/>
            <person name="Gygi S.P."/>
            <person name="Morgan D.O."/>
        </authorList>
    </citation>
    <scope>PHOSPHORYLATION [LARGE SCALE ANALYSIS] AT SER-311</scope>
    <scope>IDENTIFICATION BY MASS SPECTROMETRY [LARGE SCALE ANALYSIS]</scope>
</reference>
<reference key="18">
    <citation type="journal article" date="2012" name="Proc. Natl. Acad. Sci. U.S.A.">
        <title>N-terminal acetylome analyses and functional insights of the N-terminal acetyltransferase NatB.</title>
        <authorList>
            <person name="Van Damme P."/>
            <person name="Lasa M."/>
            <person name="Polevoda B."/>
            <person name="Gazquez C."/>
            <person name="Elosegui-Artola A."/>
            <person name="Kim D.S."/>
            <person name="De Juan-Pardo E."/>
            <person name="Demeyer K."/>
            <person name="Hole K."/>
            <person name="Larrea E."/>
            <person name="Timmerman E."/>
            <person name="Prieto J."/>
            <person name="Arnesen T."/>
            <person name="Sherman F."/>
            <person name="Gevaert K."/>
            <person name="Aldabe R."/>
        </authorList>
    </citation>
    <scope>IDENTIFICATION BY MASS SPECTROMETRY [LARGE SCALE ANALYSIS]</scope>
</reference>
<name>TFC4_YEAST</name>
<comment type="function">
    <text evidence="10 14">TFIIIC mediates tRNA and 5S RNA gene activation by binding to intragenic promoter elements. Upstream of the transcription start site, TFIIIC assembles the initiation complex TFIIIB-TFIIIC-tDNA, which is sufficient for RNA polymerase III recruitment and function. Part of the tauA domain of TFIIIC that binds boxA DNA promoter sites of tRNA and similar genes. TFC4 is the TFIIIB-assembling subunit of TFIIIC and essential for viability.</text>
</comment>
<comment type="subunit">
    <text evidence="2 4 8 9 12 13 14">Component of the TFIIIC complex composed of TFC1, TFC3, TFC4, TFC6, TFC7 and TFC8. The subunits are organized in two globular domains, tauA and tauB, connected by a proteolysis-sensitive and flexible linker. Interacts with TFC1, TFC3, TFC6, TFIIIB subunits BRF1 and BDP1, and with RNA polymerase III subunit RPC10.</text>
</comment>
<comment type="subcellular location">
    <subcellularLocation>
        <location evidence="5">Nucleus</location>
    </subcellularLocation>
</comment>
<comment type="PTM">
    <text evidence="12">Phosphorylated.</text>
</comment>
<comment type="miscellaneous">
    <text evidence="6">Present with 876 molecules/cell in log phase SD medium.</text>
</comment>
<accession>P33339</accession>
<accession>D6VUI4</accession>
<accession>Q45U37</accession>
<feature type="chain" id="PRO_0000106364" description="Transcription factor tau 131 kDa subunit">
    <location>
        <begin position="1"/>
        <end position="1025"/>
    </location>
</feature>
<feature type="repeat" description="TPR 1">
    <location>
        <begin position="128"/>
        <end position="161"/>
    </location>
</feature>
<feature type="repeat" description="TPR 2">
    <location>
        <begin position="162"/>
        <end position="195"/>
    </location>
</feature>
<feature type="repeat" description="TPR 3">
    <location>
        <begin position="196"/>
        <end position="229"/>
    </location>
</feature>
<feature type="repeat" description="TPR 4">
    <location>
        <begin position="230"/>
        <end position="263"/>
    </location>
</feature>
<feature type="repeat" description="TPR 5">
    <location>
        <begin position="264"/>
        <end position="297"/>
    </location>
</feature>
<feature type="repeat" description="TPR 6">
    <location>
        <begin position="432"/>
        <end position="465"/>
    </location>
</feature>
<feature type="repeat" description="TPR 7">
    <location>
        <begin position="467"/>
        <end position="501"/>
    </location>
</feature>
<feature type="repeat" description="TPR 8">
    <location>
        <begin position="502"/>
        <end position="535"/>
    </location>
</feature>
<feature type="repeat" description="TPR 9">
    <location>
        <begin position="536"/>
        <end position="569"/>
    </location>
</feature>
<feature type="repeat" description="TPR 10">
    <location>
        <begin position="875"/>
        <end position="908"/>
    </location>
</feature>
<feature type="repeat" description="TPR 11">
    <location>
        <begin position="959"/>
        <end position="992"/>
    </location>
</feature>
<feature type="region of interest" description="Disordered" evidence="1">
    <location>
        <begin position="1"/>
        <end position="71"/>
    </location>
</feature>
<feature type="region of interest" description="Sufficient to bind BDP1">
    <location>
        <begin position="128"/>
        <end position="569"/>
    </location>
</feature>
<feature type="region of interest" description="Disordered" evidence="1">
    <location>
        <begin position="309"/>
        <end position="334"/>
    </location>
</feature>
<feature type="compositionally biased region" description="Basic and acidic residues" evidence="1">
    <location>
        <begin position="1"/>
        <end position="26"/>
    </location>
</feature>
<feature type="compositionally biased region" description="Acidic residues" evidence="1">
    <location>
        <begin position="46"/>
        <end position="65"/>
    </location>
</feature>
<feature type="compositionally biased region" description="Acidic residues" evidence="1">
    <location>
        <begin position="311"/>
        <end position="325"/>
    </location>
</feature>
<feature type="modified residue" description="Phosphoserine" evidence="16">
    <location>
        <position position="311"/>
    </location>
</feature>
<feature type="sequence variant" description="In strain: SK1." evidence="7">
    <original>I</original>
    <variation>T</variation>
    <location>
        <position position="280"/>
    </location>
</feature>
<feature type="sequence variant" description="In strain: SK1." evidence="7">
    <original>M</original>
    <variation>V</variation>
    <location>
        <position position="635"/>
    </location>
</feature>
<feature type="sequence variant" description="In strain: SK1." evidence="7">
    <original>I</original>
    <variation>V</variation>
    <location>
        <position position="1025"/>
    </location>
</feature>
<feature type="mutagenesis site" description="In PCF1-17; increases RNA polymerase III gene transcription." evidence="15">
    <original>E</original>
    <variation>K</variation>
    <location>
        <position position="148"/>
    </location>
</feature>
<feature type="mutagenesis site" description="In PCF1-12; increases RNA polymerase III gene transcription." evidence="15">
    <original>F</original>
    <variation>L</variation>
    <location>
        <position position="162"/>
    </location>
</feature>
<feature type="mutagenesis site" description="In PCF1-139; increases RNA polymerase III gene transcription." evidence="15">
    <original>F</original>
    <variation>S</variation>
    <location>
        <position position="162"/>
    </location>
</feature>
<feature type="mutagenesis site" description="In PCF1-19; increases RNA polymerase III gene transcription." evidence="15">
    <original>A</original>
    <variation>V</variation>
    <location>
        <position position="164"/>
    </location>
</feature>
<feature type="mutagenesis site" description="In PCF1-2; increases RNA polymerase III gene transcription due to an increase in the recruitment of BRF1 to TFIIIC-DNA. No effect on affinity of TFIIIC for DNA." evidence="15">
    <original>T</original>
    <variation>I</variation>
    <location>
        <position position="167"/>
    </location>
</feature>
<feature type="mutagenesis site" description="In PCF1-11; increases RNA polymerase III gene transcription.">
    <original>Y</original>
    <variation>C</variation>
    <location>
        <position position="172"/>
    </location>
</feature>
<feature type="mutagenesis site" description="In PCF1-23; increases RNA polymerase III gene transcription." evidence="15">
    <original>A</original>
    <variation>T</variation>
    <location>
        <position position="188"/>
    </location>
</feature>
<feature type="mutagenesis site" description="In PCF1-1; affects the rate of recruitment of TFIIIB to the template. Increases the amount of transcriptionally active TFIIIB. Increases RNA polymerase III gene transcription. Increases the binding affinity for BRF1, but does not affect the binding affinity for BDP1 in the TFIIIC-dependent assembly of TFIIIB. Overcomes autoinhibition of BRF1 binding." evidence="3 11 13 15">
    <original>H</original>
    <variation>Y</variation>
    <location>
        <position position="190"/>
    </location>
</feature>
<feature type="mutagenesis site" description="In PCF1-138; increases RNA polymerase III gene transcription." evidence="15">
    <original>N</original>
    <variation>L</variation>
    <location>
        <position position="192"/>
    </location>
</feature>
<feature type="mutagenesis site" description="In PCF1-15; increases RNA polymerase III gene transcription." evidence="15">
    <original>W</original>
    <variation>R</variation>
    <location>
        <position position="199"/>
    </location>
</feature>
<feature type="mutagenesis site" description="RNA polymerase III defective. Defect in the recruitment of BRF1 into TFIIIB-TFIIIC-DNA complexes and diminished direct interaction between TFC4 and BRF1. Decreased binding affinity for BDP1 incorporation into TFIIIB-TFIIIC-DNA complexes and inhibited binary interaction between BDP1 and TFC4." evidence="4">
    <original>L</original>
    <variation>K</variation>
    <location>
        <position position="469"/>
    </location>
</feature>
<feature type="mutagenesis site" description="RNA polymerase III defective." evidence="4">
    <original>E</original>
    <variation>K</variation>
    <location>
        <position position="472"/>
    </location>
</feature>
<feature type="mutagenesis site" description="RNA polymerase III defective." evidence="4">
    <original>V</original>
    <variation>K</variation>
    <location>
        <position position="504"/>
    </location>
</feature>
<feature type="mutagenesis site" description="RNA polymerase III defective." evidence="4">
    <original>S</original>
    <variation>I</variation>
    <location>
        <position position="541"/>
    </location>
</feature>
<feature type="mutagenesis site" description="RNA polymerase III defective." evidence="4">
    <original>L</original>
    <variation>G</variation>
    <location>
        <position position="542"/>
    </location>
</feature>
<feature type="mutagenesis site" description="In PCF1-8; increases RNA polymerase III transcription." evidence="11">
    <original>R</original>
    <variation>E</variation>
    <location>
        <position position="728"/>
    </location>
</feature>
<feature type="mutagenesis site" description="In PCF1-7; increases RNA polymerase III transcription." evidence="11">
    <original>R</original>
    <variation>G</variation>
    <location>
        <position position="728"/>
    </location>
</feature>
<feature type="mutagenesis site" description="In PCF1-4; increases RNA polymerase III transcription ninefold over wild-type. Increases the amount of transcriptionally active TFIIIB." evidence="11">
    <original>R</original>
    <variation>H</variation>
    <location>
        <position position="728"/>
    </location>
</feature>
<feature type="mutagenesis site" description="In PCF1-3; increases RNA polymerase III transcription two- to threefold over wild-type. Increases the amount of transcriptionally active TFIIIB." evidence="11">
    <original>R</original>
    <variation>K</variation>
    <location>
        <position position="728"/>
    </location>
</feature>
<feature type="mutagenesis site" description="In PCF1-5; increases RNA polymerase III transcription." evidence="11">
    <original>R</original>
    <variation>M</variation>
    <location>
        <position position="728"/>
    </location>
</feature>
<feature type="mutagenesis site" description="In PCF1-6; increases RNA polymerase III transcription." evidence="11">
    <original>R</original>
    <variation>V</variation>
    <location>
        <position position="728"/>
    </location>
</feature>
<feature type="helix" evidence="18">
    <location>
        <begin position="132"/>
        <end position="139"/>
    </location>
</feature>
<feature type="strand" evidence="18">
    <location>
        <begin position="143"/>
        <end position="145"/>
    </location>
</feature>
<feature type="helix" evidence="18">
    <location>
        <begin position="148"/>
        <end position="157"/>
    </location>
</feature>
<feature type="helix" evidence="18">
    <location>
        <begin position="162"/>
        <end position="175"/>
    </location>
</feature>
<feature type="helix" evidence="18">
    <location>
        <begin position="178"/>
        <end position="189"/>
    </location>
</feature>
<feature type="helix" evidence="18">
    <location>
        <begin position="196"/>
        <end position="208"/>
    </location>
</feature>
<feature type="helix" evidence="18">
    <location>
        <begin position="212"/>
        <end position="225"/>
    </location>
</feature>
<feature type="helix" evidence="18">
    <location>
        <begin position="232"/>
        <end position="243"/>
    </location>
</feature>
<feature type="helix" evidence="18">
    <location>
        <begin position="246"/>
        <end position="258"/>
    </location>
</feature>
<feature type="helix" evidence="18">
    <location>
        <begin position="264"/>
        <end position="276"/>
    </location>
</feature>
<feature type="helix" evidence="18">
    <location>
        <begin position="280"/>
        <end position="303"/>
    </location>
</feature>
<feature type="helix" evidence="18">
    <location>
        <begin position="343"/>
        <end position="347"/>
    </location>
</feature>
<feature type="helix" evidence="18">
    <location>
        <begin position="357"/>
        <end position="370"/>
    </location>
</feature>
<feature type="helix" evidence="18">
    <location>
        <begin position="374"/>
        <end position="387"/>
    </location>
</feature>
<feature type="turn" evidence="18">
    <location>
        <begin position="388"/>
        <end position="390"/>
    </location>
</feature>
<feature type="helix" evidence="18">
    <location>
        <begin position="395"/>
        <end position="398"/>
    </location>
</feature>
<feature type="strand" evidence="18">
    <location>
        <begin position="400"/>
        <end position="402"/>
    </location>
</feature>
<feature type="helix" evidence="18">
    <location>
        <begin position="408"/>
        <end position="412"/>
    </location>
</feature>
<feature type="helix" evidence="18">
    <location>
        <begin position="416"/>
        <end position="418"/>
    </location>
</feature>
<feature type="turn" evidence="18">
    <location>
        <begin position="421"/>
        <end position="423"/>
    </location>
</feature>
<feature type="strand" evidence="18">
    <location>
        <begin position="424"/>
        <end position="426"/>
    </location>
</feature>
<feature type="helix" evidence="18">
    <location>
        <begin position="432"/>
        <end position="444"/>
    </location>
</feature>
<feature type="helix" evidence="18">
    <location>
        <begin position="448"/>
        <end position="455"/>
    </location>
</feature>
<feature type="helix" evidence="18">
    <location>
        <begin position="456"/>
        <end position="459"/>
    </location>
</feature>
<feature type="turn" evidence="18">
    <location>
        <begin position="463"/>
        <end position="465"/>
    </location>
</feature>
<feature type="helix" evidence="18">
    <location>
        <begin position="467"/>
        <end position="479"/>
    </location>
</feature>
<feature type="helix" evidence="18">
    <location>
        <begin position="483"/>
        <end position="490"/>
    </location>
</feature>
<feature type="helix" evidence="18">
    <location>
        <begin position="491"/>
        <end position="495"/>
    </location>
</feature>
<feature type="helix" evidence="17">
    <location>
        <begin position="497"/>
        <end position="499"/>
    </location>
</feature>
<feature type="helix" evidence="18">
    <location>
        <begin position="502"/>
        <end position="514"/>
    </location>
</feature>
<feature type="helix" evidence="18">
    <location>
        <begin position="518"/>
        <end position="528"/>
    </location>
</feature>
<feature type="turn" evidence="18">
    <location>
        <begin position="529"/>
        <end position="531"/>
    </location>
</feature>
<feature type="helix" evidence="18">
    <location>
        <begin position="537"/>
        <end position="548"/>
    </location>
</feature>
<feature type="helix" evidence="18">
    <location>
        <begin position="552"/>
        <end position="570"/>
    </location>
</feature>
<feature type="helix" evidence="18">
    <location>
        <begin position="613"/>
        <end position="636"/>
    </location>
</feature>
<feature type="helix" evidence="18">
    <location>
        <begin position="648"/>
        <end position="664"/>
    </location>
</feature>
<feature type="helix" evidence="18">
    <location>
        <begin position="665"/>
        <end position="667"/>
    </location>
</feature>
<feature type="strand" evidence="18">
    <location>
        <begin position="668"/>
        <end position="670"/>
    </location>
</feature>
<feature type="helix" evidence="18">
    <location>
        <begin position="677"/>
        <end position="683"/>
    </location>
</feature>
<feature type="helix" evidence="18">
    <location>
        <begin position="684"/>
        <end position="686"/>
    </location>
</feature>
<feature type="helix" evidence="18">
    <location>
        <begin position="692"/>
        <end position="700"/>
    </location>
</feature>
<feature type="turn" evidence="18">
    <location>
        <begin position="701"/>
        <end position="703"/>
    </location>
</feature>
<feature type="strand" evidence="18">
    <location>
        <begin position="727"/>
        <end position="730"/>
    </location>
</feature>
<feature type="strand" evidence="18">
    <location>
        <begin position="732"/>
        <end position="735"/>
    </location>
</feature>
<feature type="helix" evidence="18">
    <location>
        <begin position="736"/>
        <end position="748"/>
    </location>
</feature>
<feature type="helix" evidence="18">
    <location>
        <begin position="752"/>
        <end position="762"/>
    </location>
</feature>
<feature type="strand" evidence="18">
    <location>
        <begin position="765"/>
        <end position="771"/>
    </location>
</feature>
<feature type="turn" evidence="18">
    <location>
        <begin position="772"/>
        <end position="774"/>
    </location>
</feature>
<feature type="helix" evidence="18">
    <location>
        <begin position="775"/>
        <end position="786"/>
    </location>
</feature>
<feature type="turn" evidence="18">
    <location>
        <begin position="787"/>
        <end position="789"/>
    </location>
</feature>
<feature type="helix" evidence="18">
    <location>
        <begin position="792"/>
        <end position="805"/>
    </location>
</feature>
<feature type="helix" evidence="18">
    <location>
        <begin position="810"/>
        <end position="819"/>
    </location>
</feature>
<feature type="strand" evidence="18">
    <location>
        <begin position="821"/>
        <end position="823"/>
    </location>
</feature>
<feature type="helix" evidence="18">
    <location>
        <begin position="824"/>
        <end position="830"/>
    </location>
</feature>
<feature type="helix" evidence="18">
    <location>
        <begin position="833"/>
        <end position="851"/>
    </location>
</feature>
<feature type="helix" evidence="18">
    <location>
        <begin position="877"/>
        <end position="886"/>
    </location>
</feature>
<feature type="turn" evidence="18">
    <location>
        <begin position="887"/>
        <end position="889"/>
    </location>
</feature>
<feature type="helix" evidence="18">
    <location>
        <begin position="891"/>
        <end position="902"/>
    </location>
</feature>
<feature type="helix" evidence="18">
    <location>
        <begin position="909"/>
        <end position="923"/>
    </location>
</feature>
<feature type="helix" evidence="18">
    <location>
        <begin position="930"/>
        <end position="952"/>
    </location>
</feature>
<feature type="helix" evidence="18">
    <location>
        <begin position="957"/>
        <end position="971"/>
    </location>
</feature>
<feature type="helix" evidence="18">
    <location>
        <begin position="975"/>
        <end position="987"/>
    </location>
</feature>
<feature type="helix" evidence="18">
    <location>
        <begin position="995"/>
        <end position="1008"/>
    </location>
</feature>
<feature type="helix" evidence="18">
    <location>
        <begin position="1012"/>
        <end position="1021"/>
    </location>
</feature>